<sequence length="212" mass="24121">MNSQQCVIIAIAGASASGKSLIAKTIFDELRRDLGTDQIGVINEDAYYRDQSHLSMDERVLTNYDHPKALDHQLLCTHLQLLKSGEAVDIPCYSYTEHTRMAETVKMTPKKVIILEGILLLTDPKLRELMDASVFMDTPLDICFLRRLTRDVAERGRTMESVISQYKKTVRPMFLQFIEPSKQYADIIVPRGGKNRIATDILKTRIQHLLAK</sequence>
<gene>
    <name evidence="1" type="primary">udk</name>
    <name type="ordered locus">Shewana3_1762</name>
</gene>
<accession>A0KW26</accession>
<proteinExistence type="inferred from homology"/>
<dbReference type="EC" id="2.7.1.48" evidence="1"/>
<dbReference type="EMBL" id="CP000469">
    <property type="protein sequence ID" value="ABK47995.1"/>
    <property type="molecule type" value="Genomic_DNA"/>
</dbReference>
<dbReference type="RefSeq" id="WP_011072566.1">
    <property type="nucleotide sequence ID" value="NC_008577.1"/>
</dbReference>
<dbReference type="SMR" id="A0KW26"/>
<dbReference type="STRING" id="94122.Shewana3_1762"/>
<dbReference type="GeneID" id="94727753"/>
<dbReference type="KEGG" id="shn:Shewana3_1762"/>
<dbReference type="eggNOG" id="COG0572">
    <property type="taxonomic scope" value="Bacteria"/>
</dbReference>
<dbReference type="HOGENOM" id="CLU_021278_1_2_6"/>
<dbReference type="OrthoDB" id="9777642at2"/>
<dbReference type="UniPathway" id="UPA00574">
    <property type="reaction ID" value="UER00637"/>
</dbReference>
<dbReference type="UniPathway" id="UPA00579">
    <property type="reaction ID" value="UER00640"/>
</dbReference>
<dbReference type="Proteomes" id="UP000002589">
    <property type="component" value="Chromosome"/>
</dbReference>
<dbReference type="GO" id="GO:0005737">
    <property type="term" value="C:cytoplasm"/>
    <property type="evidence" value="ECO:0007669"/>
    <property type="project" value="UniProtKB-SubCell"/>
</dbReference>
<dbReference type="GO" id="GO:0005524">
    <property type="term" value="F:ATP binding"/>
    <property type="evidence" value="ECO:0007669"/>
    <property type="project" value="UniProtKB-UniRule"/>
</dbReference>
<dbReference type="GO" id="GO:0043771">
    <property type="term" value="F:cytidine kinase activity"/>
    <property type="evidence" value="ECO:0007669"/>
    <property type="project" value="RHEA"/>
</dbReference>
<dbReference type="GO" id="GO:0004849">
    <property type="term" value="F:uridine kinase activity"/>
    <property type="evidence" value="ECO:0007669"/>
    <property type="project" value="UniProtKB-UniRule"/>
</dbReference>
<dbReference type="GO" id="GO:0044211">
    <property type="term" value="P:CTP salvage"/>
    <property type="evidence" value="ECO:0007669"/>
    <property type="project" value="UniProtKB-UniRule"/>
</dbReference>
<dbReference type="GO" id="GO:0044206">
    <property type="term" value="P:UMP salvage"/>
    <property type="evidence" value="ECO:0007669"/>
    <property type="project" value="UniProtKB-UniRule"/>
</dbReference>
<dbReference type="CDD" id="cd02023">
    <property type="entry name" value="UMPK"/>
    <property type="match status" value="1"/>
</dbReference>
<dbReference type="Gene3D" id="3.40.50.300">
    <property type="entry name" value="P-loop containing nucleotide triphosphate hydrolases"/>
    <property type="match status" value="1"/>
</dbReference>
<dbReference type="HAMAP" id="MF_00551">
    <property type="entry name" value="Uridine_kinase"/>
    <property type="match status" value="1"/>
</dbReference>
<dbReference type="InterPro" id="IPR027417">
    <property type="entry name" value="P-loop_NTPase"/>
</dbReference>
<dbReference type="InterPro" id="IPR006083">
    <property type="entry name" value="PRK/URK"/>
</dbReference>
<dbReference type="InterPro" id="IPR026008">
    <property type="entry name" value="Uridine_kinase"/>
</dbReference>
<dbReference type="InterPro" id="IPR000764">
    <property type="entry name" value="Uridine_kinase-like"/>
</dbReference>
<dbReference type="NCBIfam" id="NF004018">
    <property type="entry name" value="PRK05480.1"/>
    <property type="match status" value="1"/>
</dbReference>
<dbReference type="NCBIfam" id="TIGR00235">
    <property type="entry name" value="udk"/>
    <property type="match status" value="1"/>
</dbReference>
<dbReference type="PANTHER" id="PTHR10285">
    <property type="entry name" value="URIDINE KINASE"/>
    <property type="match status" value="1"/>
</dbReference>
<dbReference type="Pfam" id="PF00485">
    <property type="entry name" value="PRK"/>
    <property type="match status" value="1"/>
</dbReference>
<dbReference type="PRINTS" id="PR00988">
    <property type="entry name" value="URIDINKINASE"/>
</dbReference>
<dbReference type="SUPFAM" id="SSF52540">
    <property type="entry name" value="P-loop containing nucleoside triphosphate hydrolases"/>
    <property type="match status" value="1"/>
</dbReference>
<name>URK_SHESA</name>
<reference key="1">
    <citation type="submission" date="2006-09" db="EMBL/GenBank/DDBJ databases">
        <title>Complete sequence of chromosome 1 of Shewanella sp. ANA-3.</title>
        <authorList>
            <person name="Copeland A."/>
            <person name="Lucas S."/>
            <person name="Lapidus A."/>
            <person name="Barry K."/>
            <person name="Detter J.C."/>
            <person name="Glavina del Rio T."/>
            <person name="Hammon N."/>
            <person name="Israni S."/>
            <person name="Dalin E."/>
            <person name="Tice H."/>
            <person name="Pitluck S."/>
            <person name="Chertkov O."/>
            <person name="Brettin T."/>
            <person name="Bruce D."/>
            <person name="Han C."/>
            <person name="Tapia R."/>
            <person name="Gilna P."/>
            <person name="Schmutz J."/>
            <person name="Larimer F."/>
            <person name="Land M."/>
            <person name="Hauser L."/>
            <person name="Kyrpides N."/>
            <person name="Kim E."/>
            <person name="Newman D."/>
            <person name="Salticov C."/>
            <person name="Konstantinidis K."/>
            <person name="Klappenback J."/>
            <person name="Tiedje J."/>
            <person name="Richardson P."/>
        </authorList>
    </citation>
    <scope>NUCLEOTIDE SEQUENCE [LARGE SCALE GENOMIC DNA]</scope>
    <source>
        <strain>ANA-3</strain>
    </source>
</reference>
<keyword id="KW-0067">ATP-binding</keyword>
<keyword id="KW-0963">Cytoplasm</keyword>
<keyword id="KW-0418">Kinase</keyword>
<keyword id="KW-0547">Nucleotide-binding</keyword>
<keyword id="KW-0808">Transferase</keyword>
<organism>
    <name type="scientific">Shewanella sp. (strain ANA-3)</name>
    <dbReference type="NCBI Taxonomy" id="94122"/>
    <lineage>
        <taxon>Bacteria</taxon>
        <taxon>Pseudomonadati</taxon>
        <taxon>Pseudomonadota</taxon>
        <taxon>Gammaproteobacteria</taxon>
        <taxon>Alteromonadales</taxon>
        <taxon>Shewanellaceae</taxon>
        <taxon>Shewanella</taxon>
    </lineage>
</organism>
<evidence type="ECO:0000255" key="1">
    <source>
        <dbReference type="HAMAP-Rule" id="MF_00551"/>
    </source>
</evidence>
<comment type="catalytic activity">
    <reaction evidence="1">
        <text>uridine + ATP = UMP + ADP + H(+)</text>
        <dbReference type="Rhea" id="RHEA:16825"/>
        <dbReference type="ChEBI" id="CHEBI:15378"/>
        <dbReference type="ChEBI" id="CHEBI:16704"/>
        <dbReference type="ChEBI" id="CHEBI:30616"/>
        <dbReference type="ChEBI" id="CHEBI:57865"/>
        <dbReference type="ChEBI" id="CHEBI:456216"/>
        <dbReference type="EC" id="2.7.1.48"/>
    </reaction>
</comment>
<comment type="catalytic activity">
    <reaction evidence="1">
        <text>cytidine + ATP = CMP + ADP + H(+)</text>
        <dbReference type="Rhea" id="RHEA:24674"/>
        <dbReference type="ChEBI" id="CHEBI:15378"/>
        <dbReference type="ChEBI" id="CHEBI:17562"/>
        <dbReference type="ChEBI" id="CHEBI:30616"/>
        <dbReference type="ChEBI" id="CHEBI:60377"/>
        <dbReference type="ChEBI" id="CHEBI:456216"/>
        <dbReference type="EC" id="2.7.1.48"/>
    </reaction>
</comment>
<comment type="pathway">
    <text evidence="1">Pyrimidine metabolism; CTP biosynthesis via salvage pathway; CTP from cytidine: step 1/3.</text>
</comment>
<comment type="pathway">
    <text evidence="1">Pyrimidine metabolism; UMP biosynthesis via salvage pathway; UMP from uridine: step 1/1.</text>
</comment>
<comment type="subcellular location">
    <subcellularLocation>
        <location evidence="1">Cytoplasm</location>
    </subcellularLocation>
</comment>
<comment type="similarity">
    <text evidence="1">Belongs to the uridine kinase family.</text>
</comment>
<protein>
    <recommendedName>
        <fullName evidence="1">Uridine kinase</fullName>
        <ecNumber evidence="1">2.7.1.48</ecNumber>
    </recommendedName>
    <alternativeName>
        <fullName evidence="1">Cytidine monophosphokinase</fullName>
    </alternativeName>
    <alternativeName>
        <fullName evidence="1">Uridine monophosphokinase</fullName>
    </alternativeName>
</protein>
<feature type="chain" id="PRO_1000017896" description="Uridine kinase">
    <location>
        <begin position="1"/>
        <end position="212"/>
    </location>
</feature>
<feature type="binding site" evidence="1">
    <location>
        <begin position="13"/>
        <end position="20"/>
    </location>
    <ligand>
        <name>ATP</name>
        <dbReference type="ChEBI" id="CHEBI:30616"/>
    </ligand>
</feature>